<feature type="chain" id="PRO_1000215492" description="Phosphoglucosamine mutase">
    <location>
        <begin position="1"/>
        <end position="454"/>
    </location>
</feature>
<feature type="active site" description="Phosphoserine intermediate" evidence="1">
    <location>
        <position position="101"/>
    </location>
</feature>
<feature type="binding site" description="via phosphate group" evidence="1">
    <location>
        <position position="101"/>
    </location>
    <ligand>
        <name>Mg(2+)</name>
        <dbReference type="ChEBI" id="CHEBI:18420"/>
    </ligand>
</feature>
<feature type="binding site" evidence="1">
    <location>
        <position position="243"/>
    </location>
    <ligand>
        <name>Mg(2+)</name>
        <dbReference type="ChEBI" id="CHEBI:18420"/>
    </ligand>
</feature>
<feature type="binding site" evidence="1">
    <location>
        <position position="245"/>
    </location>
    <ligand>
        <name>Mg(2+)</name>
        <dbReference type="ChEBI" id="CHEBI:18420"/>
    </ligand>
</feature>
<feature type="binding site" evidence="1">
    <location>
        <position position="247"/>
    </location>
    <ligand>
        <name>Mg(2+)</name>
        <dbReference type="ChEBI" id="CHEBI:18420"/>
    </ligand>
</feature>
<feature type="modified residue" description="Phosphoserine" evidence="1">
    <location>
        <position position="101"/>
    </location>
</feature>
<organism>
    <name type="scientific">Geobacter sp. (strain M21)</name>
    <dbReference type="NCBI Taxonomy" id="443144"/>
    <lineage>
        <taxon>Bacteria</taxon>
        <taxon>Pseudomonadati</taxon>
        <taxon>Thermodesulfobacteriota</taxon>
        <taxon>Desulfuromonadia</taxon>
        <taxon>Geobacterales</taxon>
        <taxon>Geobacteraceae</taxon>
        <taxon>Geobacter</taxon>
    </lineage>
</organism>
<name>GLMM_GEOSM</name>
<accession>C6E5P5</accession>
<keyword id="KW-0413">Isomerase</keyword>
<keyword id="KW-0460">Magnesium</keyword>
<keyword id="KW-0479">Metal-binding</keyword>
<keyword id="KW-0597">Phosphoprotein</keyword>
<sequence length="454" mass="49150">MKKLFGTDGVRGVANVYPMTAEMAMQIGRAAAYIFKNGKKRHRIVIGKDTRLSGYMLESALMAGICSMGVDVLLVGPLPTPGIANITSSMRADAGVVISASHNPFEDNGIKFFSRDGFKLPDETELLMEELIFSKRIDSLRPTAKEVGKAYRIDDAQGRFVVFLKSTFPKDLDLSGLKIVLDCANGAAYKVAPAVFEELGAEVISIGVKPNGTNINADCGSLHPEVMSRAVKENGADLGIALDGDADRVIFVDEYGNVVDGDRIMAICATEMLRQGTLKQNTLVATVMSNMGLDIAMKRAGGQVVKTAVGDRYVVEEMLKGGYNLGGEQSGHMIFLDHNTTGDGVLSALQVLAIMQRHQKRLSELALVMDPLPQVLVNVRLAEKSDIMQVPEIAKMINDVEERLKGEGRVLIRYSGTEPLLRIMLEGSDEGDIRCWANDIASIVEQKLGGEARG</sequence>
<gene>
    <name evidence="1" type="primary">glmM</name>
    <name type="ordered locus">GM21_1599</name>
</gene>
<proteinExistence type="inferred from homology"/>
<protein>
    <recommendedName>
        <fullName evidence="1">Phosphoglucosamine mutase</fullName>
        <ecNumber evidence="1">5.4.2.10</ecNumber>
    </recommendedName>
</protein>
<dbReference type="EC" id="5.4.2.10" evidence="1"/>
<dbReference type="EMBL" id="CP001661">
    <property type="protein sequence ID" value="ACT17654.1"/>
    <property type="molecule type" value="Genomic_DNA"/>
</dbReference>
<dbReference type="SMR" id="C6E5P5"/>
<dbReference type="STRING" id="443144.GM21_1599"/>
<dbReference type="KEGG" id="gem:GM21_1599"/>
<dbReference type="eggNOG" id="COG1109">
    <property type="taxonomic scope" value="Bacteria"/>
</dbReference>
<dbReference type="HOGENOM" id="CLU_016950_7_0_7"/>
<dbReference type="OrthoDB" id="9806956at2"/>
<dbReference type="GO" id="GO:0005829">
    <property type="term" value="C:cytosol"/>
    <property type="evidence" value="ECO:0007669"/>
    <property type="project" value="TreeGrafter"/>
</dbReference>
<dbReference type="GO" id="GO:0000287">
    <property type="term" value="F:magnesium ion binding"/>
    <property type="evidence" value="ECO:0007669"/>
    <property type="project" value="UniProtKB-UniRule"/>
</dbReference>
<dbReference type="GO" id="GO:0008966">
    <property type="term" value="F:phosphoglucosamine mutase activity"/>
    <property type="evidence" value="ECO:0007669"/>
    <property type="project" value="UniProtKB-UniRule"/>
</dbReference>
<dbReference type="GO" id="GO:0004615">
    <property type="term" value="F:phosphomannomutase activity"/>
    <property type="evidence" value="ECO:0007669"/>
    <property type="project" value="TreeGrafter"/>
</dbReference>
<dbReference type="GO" id="GO:0005975">
    <property type="term" value="P:carbohydrate metabolic process"/>
    <property type="evidence" value="ECO:0007669"/>
    <property type="project" value="InterPro"/>
</dbReference>
<dbReference type="GO" id="GO:0009252">
    <property type="term" value="P:peptidoglycan biosynthetic process"/>
    <property type="evidence" value="ECO:0007669"/>
    <property type="project" value="TreeGrafter"/>
</dbReference>
<dbReference type="GO" id="GO:0006048">
    <property type="term" value="P:UDP-N-acetylglucosamine biosynthetic process"/>
    <property type="evidence" value="ECO:0007669"/>
    <property type="project" value="TreeGrafter"/>
</dbReference>
<dbReference type="CDD" id="cd05802">
    <property type="entry name" value="GlmM"/>
    <property type="match status" value="1"/>
</dbReference>
<dbReference type="FunFam" id="3.30.310.50:FF:000001">
    <property type="entry name" value="Phosphoglucosamine mutase"/>
    <property type="match status" value="1"/>
</dbReference>
<dbReference type="FunFam" id="3.40.120.10:FF:000001">
    <property type="entry name" value="Phosphoglucosamine mutase"/>
    <property type="match status" value="1"/>
</dbReference>
<dbReference type="FunFam" id="3.40.120.10:FF:000002">
    <property type="entry name" value="Phosphoglucosamine mutase"/>
    <property type="match status" value="1"/>
</dbReference>
<dbReference type="Gene3D" id="3.40.120.10">
    <property type="entry name" value="Alpha-D-Glucose-1,6-Bisphosphate, subunit A, domain 3"/>
    <property type="match status" value="3"/>
</dbReference>
<dbReference type="Gene3D" id="3.30.310.50">
    <property type="entry name" value="Alpha-D-phosphohexomutase, C-terminal domain"/>
    <property type="match status" value="1"/>
</dbReference>
<dbReference type="HAMAP" id="MF_01554_B">
    <property type="entry name" value="GlmM_B"/>
    <property type="match status" value="1"/>
</dbReference>
<dbReference type="InterPro" id="IPR005844">
    <property type="entry name" value="A-D-PHexomutase_a/b/a-I"/>
</dbReference>
<dbReference type="InterPro" id="IPR016055">
    <property type="entry name" value="A-D-PHexomutase_a/b/a-I/II/III"/>
</dbReference>
<dbReference type="InterPro" id="IPR005845">
    <property type="entry name" value="A-D-PHexomutase_a/b/a-II"/>
</dbReference>
<dbReference type="InterPro" id="IPR005846">
    <property type="entry name" value="A-D-PHexomutase_a/b/a-III"/>
</dbReference>
<dbReference type="InterPro" id="IPR005843">
    <property type="entry name" value="A-D-PHexomutase_C"/>
</dbReference>
<dbReference type="InterPro" id="IPR036900">
    <property type="entry name" value="A-D-PHexomutase_C_sf"/>
</dbReference>
<dbReference type="InterPro" id="IPR016066">
    <property type="entry name" value="A-D-PHexomutase_CS"/>
</dbReference>
<dbReference type="InterPro" id="IPR005841">
    <property type="entry name" value="Alpha-D-phosphohexomutase_SF"/>
</dbReference>
<dbReference type="InterPro" id="IPR006352">
    <property type="entry name" value="GlmM_bact"/>
</dbReference>
<dbReference type="InterPro" id="IPR050060">
    <property type="entry name" value="Phosphoglucosamine_mutase"/>
</dbReference>
<dbReference type="NCBIfam" id="TIGR01455">
    <property type="entry name" value="glmM"/>
    <property type="match status" value="1"/>
</dbReference>
<dbReference type="NCBIfam" id="NF008139">
    <property type="entry name" value="PRK10887.1"/>
    <property type="match status" value="1"/>
</dbReference>
<dbReference type="PANTHER" id="PTHR42946:SF1">
    <property type="entry name" value="PHOSPHOGLUCOMUTASE (ALPHA-D-GLUCOSE-1,6-BISPHOSPHATE-DEPENDENT)"/>
    <property type="match status" value="1"/>
</dbReference>
<dbReference type="PANTHER" id="PTHR42946">
    <property type="entry name" value="PHOSPHOHEXOSE MUTASE"/>
    <property type="match status" value="1"/>
</dbReference>
<dbReference type="Pfam" id="PF02878">
    <property type="entry name" value="PGM_PMM_I"/>
    <property type="match status" value="1"/>
</dbReference>
<dbReference type="Pfam" id="PF02879">
    <property type="entry name" value="PGM_PMM_II"/>
    <property type="match status" value="1"/>
</dbReference>
<dbReference type="Pfam" id="PF02880">
    <property type="entry name" value="PGM_PMM_III"/>
    <property type="match status" value="1"/>
</dbReference>
<dbReference type="Pfam" id="PF00408">
    <property type="entry name" value="PGM_PMM_IV"/>
    <property type="match status" value="1"/>
</dbReference>
<dbReference type="PRINTS" id="PR00509">
    <property type="entry name" value="PGMPMM"/>
</dbReference>
<dbReference type="SUPFAM" id="SSF55957">
    <property type="entry name" value="Phosphoglucomutase, C-terminal domain"/>
    <property type="match status" value="1"/>
</dbReference>
<dbReference type="SUPFAM" id="SSF53738">
    <property type="entry name" value="Phosphoglucomutase, first 3 domains"/>
    <property type="match status" value="3"/>
</dbReference>
<dbReference type="PROSITE" id="PS00710">
    <property type="entry name" value="PGM_PMM"/>
    <property type="match status" value="1"/>
</dbReference>
<reference key="1">
    <citation type="submission" date="2009-07" db="EMBL/GenBank/DDBJ databases">
        <title>Complete sequence of Geobacter sp. M21.</title>
        <authorList>
            <consortium name="US DOE Joint Genome Institute"/>
            <person name="Lucas S."/>
            <person name="Copeland A."/>
            <person name="Lapidus A."/>
            <person name="Glavina del Rio T."/>
            <person name="Dalin E."/>
            <person name="Tice H."/>
            <person name="Bruce D."/>
            <person name="Goodwin L."/>
            <person name="Pitluck S."/>
            <person name="Saunders E."/>
            <person name="Brettin T."/>
            <person name="Detter J.C."/>
            <person name="Han C."/>
            <person name="Larimer F."/>
            <person name="Land M."/>
            <person name="Hauser L."/>
            <person name="Kyrpides N."/>
            <person name="Ovchinnikova G."/>
            <person name="Lovley D."/>
        </authorList>
    </citation>
    <scope>NUCLEOTIDE SEQUENCE [LARGE SCALE GENOMIC DNA]</scope>
    <source>
        <strain>M21</strain>
    </source>
</reference>
<evidence type="ECO:0000255" key="1">
    <source>
        <dbReference type="HAMAP-Rule" id="MF_01554"/>
    </source>
</evidence>
<comment type="function">
    <text evidence="1">Catalyzes the conversion of glucosamine-6-phosphate to glucosamine-1-phosphate.</text>
</comment>
<comment type="catalytic activity">
    <reaction evidence="1">
        <text>alpha-D-glucosamine 1-phosphate = D-glucosamine 6-phosphate</text>
        <dbReference type="Rhea" id="RHEA:23424"/>
        <dbReference type="ChEBI" id="CHEBI:58516"/>
        <dbReference type="ChEBI" id="CHEBI:58725"/>
        <dbReference type="EC" id="5.4.2.10"/>
    </reaction>
</comment>
<comment type="cofactor">
    <cofactor evidence="1">
        <name>Mg(2+)</name>
        <dbReference type="ChEBI" id="CHEBI:18420"/>
    </cofactor>
    <text evidence="1">Binds 1 Mg(2+) ion per subunit.</text>
</comment>
<comment type="PTM">
    <text evidence="1">Activated by phosphorylation.</text>
</comment>
<comment type="similarity">
    <text evidence="1">Belongs to the phosphohexose mutase family.</text>
</comment>